<proteinExistence type="inferred from homology"/>
<gene>
    <name evidence="1" type="primary">recR</name>
    <name type="ordered locus">Bcen_6254</name>
</gene>
<feature type="chain" id="PRO_0000322867" description="Recombination protein RecR">
    <location>
        <begin position="1"/>
        <end position="198"/>
    </location>
</feature>
<feature type="domain" description="Toprim" evidence="1">
    <location>
        <begin position="80"/>
        <end position="175"/>
    </location>
</feature>
<feature type="zinc finger region" description="C4-type" evidence="1">
    <location>
        <begin position="57"/>
        <end position="72"/>
    </location>
</feature>
<organism>
    <name type="scientific">Burkholderia orbicola (strain AU 1054)</name>
    <dbReference type="NCBI Taxonomy" id="331271"/>
    <lineage>
        <taxon>Bacteria</taxon>
        <taxon>Pseudomonadati</taxon>
        <taxon>Pseudomonadota</taxon>
        <taxon>Betaproteobacteria</taxon>
        <taxon>Burkholderiales</taxon>
        <taxon>Burkholderiaceae</taxon>
        <taxon>Burkholderia</taxon>
        <taxon>Burkholderia cepacia complex</taxon>
        <taxon>Burkholderia orbicola</taxon>
    </lineage>
</organism>
<evidence type="ECO:0000255" key="1">
    <source>
        <dbReference type="HAMAP-Rule" id="MF_00017"/>
    </source>
</evidence>
<keyword id="KW-0227">DNA damage</keyword>
<keyword id="KW-0233">DNA recombination</keyword>
<keyword id="KW-0234">DNA repair</keyword>
<keyword id="KW-0479">Metal-binding</keyword>
<keyword id="KW-0862">Zinc</keyword>
<keyword id="KW-0863">Zinc-finger</keyword>
<protein>
    <recommendedName>
        <fullName evidence="1">Recombination protein RecR</fullName>
    </recommendedName>
</protein>
<name>RECR_BURO1</name>
<accession>Q1BGY7</accession>
<sequence>MKQPSALSALVEALRVLPGVGPKSAQRMAVHLMQHDREGAERLGRSLLFATEHLQHCEKCNTFTEAQICEVCSDEERDPTLLCVVETPADQIMLEQTMTYRGLYFVLMGRLSPLDGIGPKEIHFDRLVRRASDGVVKEVVLATNFTNEGEATAHYLGQTLKARGLAVTRLARGVPVGGELEYVDAGTIARAMLDRRTM</sequence>
<comment type="function">
    <text evidence="1">May play a role in DNA repair. It seems to be involved in an RecBC-independent recombinational process of DNA repair. It may act with RecF and RecO.</text>
</comment>
<comment type="similarity">
    <text evidence="1">Belongs to the RecR family.</text>
</comment>
<reference key="1">
    <citation type="submission" date="2006-05" db="EMBL/GenBank/DDBJ databases">
        <title>Complete sequence of chromosome 3 of Burkholderia cenocepacia AU 1054.</title>
        <authorList>
            <consortium name="US DOE Joint Genome Institute"/>
            <person name="Copeland A."/>
            <person name="Lucas S."/>
            <person name="Lapidus A."/>
            <person name="Barry K."/>
            <person name="Detter J.C."/>
            <person name="Glavina del Rio T."/>
            <person name="Hammon N."/>
            <person name="Israni S."/>
            <person name="Dalin E."/>
            <person name="Tice H."/>
            <person name="Pitluck S."/>
            <person name="Chain P."/>
            <person name="Malfatti S."/>
            <person name="Shin M."/>
            <person name="Vergez L."/>
            <person name="Schmutz J."/>
            <person name="Larimer F."/>
            <person name="Land M."/>
            <person name="Hauser L."/>
            <person name="Kyrpides N."/>
            <person name="Lykidis A."/>
            <person name="LiPuma J.J."/>
            <person name="Konstantinidis K."/>
            <person name="Tiedje J.M."/>
            <person name="Richardson P."/>
        </authorList>
    </citation>
    <scope>NUCLEOTIDE SEQUENCE [LARGE SCALE GENOMIC DNA]</scope>
    <source>
        <strain>AU 1054</strain>
    </source>
</reference>
<dbReference type="EMBL" id="CP000380">
    <property type="protein sequence ID" value="ABF81118.1"/>
    <property type="molecule type" value="Genomic_DNA"/>
</dbReference>
<dbReference type="SMR" id="Q1BGY7"/>
<dbReference type="HOGENOM" id="CLU_060739_1_2_4"/>
<dbReference type="GO" id="GO:0003677">
    <property type="term" value="F:DNA binding"/>
    <property type="evidence" value="ECO:0007669"/>
    <property type="project" value="UniProtKB-UniRule"/>
</dbReference>
<dbReference type="GO" id="GO:0008270">
    <property type="term" value="F:zinc ion binding"/>
    <property type="evidence" value="ECO:0007669"/>
    <property type="project" value="UniProtKB-KW"/>
</dbReference>
<dbReference type="GO" id="GO:0006310">
    <property type="term" value="P:DNA recombination"/>
    <property type="evidence" value="ECO:0007669"/>
    <property type="project" value="UniProtKB-UniRule"/>
</dbReference>
<dbReference type="GO" id="GO:0006281">
    <property type="term" value="P:DNA repair"/>
    <property type="evidence" value="ECO:0007669"/>
    <property type="project" value="UniProtKB-UniRule"/>
</dbReference>
<dbReference type="CDD" id="cd01025">
    <property type="entry name" value="TOPRIM_recR"/>
    <property type="match status" value="1"/>
</dbReference>
<dbReference type="Gene3D" id="3.40.1360.10">
    <property type="match status" value="1"/>
</dbReference>
<dbReference type="Gene3D" id="6.10.250.240">
    <property type="match status" value="1"/>
</dbReference>
<dbReference type="Gene3D" id="1.10.8.420">
    <property type="entry name" value="RecR Domain 1"/>
    <property type="match status" value="1"/>
</dbReference>
<dbReference type="HAMAP" id="MF_00017">
    <property type="entry name" value="RecR"/>
    <property type="match status" value="1"/>
</dbReference>
<dbReference type="InterPro" id="IPR000093">
    <property type="entry name" value="DNA_Rcmb_RecR"/>
</dbReference>
<dbReference type="InterPro" id="IPR023627">
    <property type="entry name" value="Rcmb_RecR"/>
</dbReference>
<dbReference type="InterPro" id="IPR015967">
    <property type="entry name" value="Rcmb_RecR_Znf"/>
</dbReference>
<dbReference type="InterPro" id="IPR006171">
    <property type="entry name" value="TOPRIM_dom"/>
</dbReference>
<dbReference type="InterPro" id="IPR034137">
    <property type="entry name" value="TOPRIM_RecR"/>
</dbReference>
<dbReference type="NCBIfam" id="TIGR00615">
    <property type="entry name" value="recR"/>
    <property type="match status" value="1"/>
</dbReference>
<dbReference type="PANTHER" id="PTHR30446">
    <property type="entry name" value="RECOMBINATION PROTEIN RECR"/>
    <property type="match status" value="1"/>
</dbReference>
<dbReference type="PANTHER" id="PTHR30446:SF0">
    <property type="entry name" value="RECOMBINATION PROTEIN RECR"/>
    <property type="match status" value="1"/>
</dbReference>
<dbReference type="Pfam" id="PF21175">
    <property type="entry name" value="RecR_C"/>
    <property type="match status" value="1"/>
</dbReference>
<dbReference type="Pfam" id="PF21176">
    <property type="entry name" value="RecR_HhH"/>
    <property type="match status" value="1"/>
</dbReference>
<dbReference type="Pfam" id="PF02132">
    <property type="entry name" value="RecR_ZnF"/>
    <property type="match status" value="1"/>
</dbReference>
<dbReference type="Pfam" id="PF13662">
    <property type="entry name" value="Toprim_4"/>
    <property type="match status" value="1"/>
</dbReference>
<dbReference type="SMART" id="SM00493">
    <property type="entry name" value="TOPRIM"/>
    <property type="match status" value="1"/>
</dbReference>
<dbReference type="SUPFAM" id="SSF111304">
    <property type="entry name" value="Recombination protein RecR"/>
    <property type="match status" value="1"/>
</dbReference>
<dbReference type="PROSITE" id="PS01300">
    <property type="entry name" value="RECR"/>
    <property type="match status" value="1"/>
</dbReference>
<dbReference type="PROSITE" id="PS50880">
    <property type="entry name" value="TOPRIM"/>
    <property type="match status" value="1"/>
</dbReference>